<organism>
    <name type="scientific">Plasmopara viticola</name>
    <name type="common">Downy mildew of grapevine</name>
    <name type="synonym">Botrytis viticola</name>
    <dbReference type="NCBI Taxonomy" id="143451"/>
    <lineage>
        <taxon>Eukaryota</taxon>
        <taxon>Sar</taxon>
        <taxon>Stramenopiles</taxon>
        <taxon>Oomycota</taxon>
        <taxon>Peronosporales</taxon>
        <taxon>Peronosporaceae</taxon>
        <taxon>Plasmopara</taxon>
    </lineage>
</organism>
<name>RLR9_PLAVT</name>
<sequence length="116" mass="13105">MRLIYIFMVSIVTTLHASSSAILDPNDVKFTTKNVESPDSSDAAYVAGRILRGTDGNVNREQERKILLKRKHKRHYYKPSHAHDSAGSEAFHSAKKALKSSIRATKARLVPPYQRR</sequence>
<keyword id="KW-1035">Host cytoplasm</keyword>
<keyword id="KW-1048">Host nucleus</keyword>
<keyword id="KW-0964">Secreted</keyword>
<keyword id="KW-0732">Signal</keyword>
<keyword id="KW-0843">Virulence</keyword>
<feature type="signal peptide" evidence="1">
    <location>
        <begin position="1"/>
        <end position="17"/>
    </location>
</feature>
<feature type="chain" id="PRO_5007999401" description="Secreted RxLR effector protein 9">
    <location>
        <begin position="18"/>
        <end position="116"/>
    </location>
</feature>
<feature type="short sequence motif" description="RxLR-dEER" evidence="6">
    <location>
        <begin position="49"/>
        <end position="64"/>
    </location>
</feature>
<dbReference type="EMBL" id="KX010949">
    <property type="protein sequence ID" value="ANC73369.1"/>
    <property type="molecule type" value="mRNA"/>
</dbReference>
<dbReference type="GO" id="GO:0005576">
    <property type="term" value="C:extracellular region"/>
    <property type="evidence" value="ECO:0007669"/>
    <property type="project" value="UniProtKB-SubCell"/>
</dbReference>
<dbReference type="GO" id="GO:0030430">
    <property type="term" value="C:host cell cytoplasm"/>
    <property type="evidence" value="ECO:0007669"/>
    <property type="project" value="UniProtKB-SubCell"/>
</dbReference>
<dbReference type="GO" id="GO:0042025">
    <property type="term" value="C:host cell nucleus"/>
    <property type="evidence" value="ECO:0007669"/>
    <property type="project" value="UniProtKB-SubCell"/>
</dbReference>
<dbReference type="InterPro" id="IPR031825">
    <property type="entry name" value="RXLR"/>
</dbReference>
<dbReference type="Pfam" id="PF16810">
    <property type="entry name" value="RXLR"/>
    <property type="match status" value="1"/>
</dbReference>
<evidence type="ECO:0000255" key="1"/>
<evidence type="ECO:0000269" key="2">
    <source>
    </source>
</evidence>
<evidence type="ECO:0000269" key="3">
    <source ref="2"/>
</evidence>
<evidence type="ECO:0000303" key="4">
    <source ref="2"/>
</evidence>
<evidence type="ECO:0000305" key="5"/>
<evidence type="ECO:0000305" key="6">
    <source ref="2"/>
</evidence>
<proteinExistence type="evidence at transcript level"/>
<gene>
    <name evidence="4" type="primary">RxLR9</name>
</gene>
<accession>A0A172M416</accession>
<comment type="function">
    <text evidence="2 3">Effector that acts as a broad suppressor of cell death to interrupt plant immunity. Inhibits cell death induced by cell death-inducing proteins, including the PAMP elicitor INF1 from P.infestans.</text>
</comment>
<comment type="subcellular location">
    <subcellularLocation>
        <location evidence="2">Secreted</location>
    </subcellularLocation>
    <subcellularLocation>
        <location evidence="2">Host cytoplasm</location>
    </subcellularLocation>
    <subcellularLocation>
        <location evidence="2">Host nucleus</location>
    </subcellularLocation>
</comment>
<comment type="induction">
    <text evidence="2 3">Expression is up-regulated at later stages of infection.</text>
</comment>
<comment type="domain">
    <text evidence="6">The RxLR-dEER motif acts to carry the protein into the host cell cytoplasm through binding to cell surface phosphatidylinositol-3-phosphate.</text>
</comment>
<comment type="similarity">
    <text evidence="5">Belongs to the RxLR effector family.</text>
</comment>
<reference key="1">
    <citation type="journal article" date="2016" name="Front. Microbiol.">
        <title>Studying the mechanism of Plasmopara viticola RxLR effectors on suppressing plant immunity.</title>
        <authorList>
            <person name="Xiang J."/>
            <person name="Li X."/>
            <person name="Wu J."/>
            <person name="Yin L."/>
            <person name="Zhang Y."/>
            <person name="Lu J."/>
        </authorList>
    </citation>
    <scope>NUCLEOTIDE SEQUENCE [MRNA]</scope>
    <scope>INDUCTION</scope>
    <scope>FUNCTION</scope>
    <scope>SUBCELLULAR LOCATION</scope>
    <source>
        <strain>ZJ-1-1</strain>
    </source>
</reference>
<reference key="2">
    <citation type="journal article" date="2015" name="Physiol. Mol. Plant Pathol.">
        <title>Characterization of the secretome of Plasmopara viticola by de novo transcriptome analysis.</title>
        <authorList>
            <person name="Yin L."/>
            <person name="Li X."/>
            <person name="Xiang J."/>
            <person name="Qu J."/>
            <person name="Zhang Y."/>
            <person name="Dry I.B."/>
            <person name="Lu J."/>
        </authorList>
    </citation>
    <scope>IDENTIFICATION</scope>
    <scope>INDUCTION</scope>
    <scope>FUNCTION</scope>
    <scope>DOMAIN</scope>
</reference>
<protein>
    <recommendedName>
        <fullName evidence="4">Secreted RxLR effector protein 9</fullName>
    </recommendedName>
</protein>